<reference key="1">
    <citation type="submission" date="2007-11" db="EMBL/GenBank/DDBJ databases">
        <authorList>
            <consortium name="The Salmonella enterica serovar Paratyphi B Genome Sequencing Project"/>
            <person name="McClelland M."/>
            <person name="Sanderson E.K."/>
            <person name="Porwollik S."/>
            <person name="Spieth J."/>
            <person name="Clifton W.S."/>
            <person name="Fulton R."/>
            <person name="Cordes M."/>
            <person name="Wollam A."/>
            <person name="Shah N."/>
            <person name="Pepin K."/>
            <person name="Bhonagiri V."/>
            <person name="Nash W."/>
            <person name="Johnson M."/>
            <person name="Thiruvilangam P."/>
            <person name="Wilson R."/>
        </authorList>
    </citation>
    <scope>NUCLEOTIDE SEQUENCE [LARGE SCALE GENOMIC DNA]</scope>
    <source>
        <strain>ATCC BAA-1250 / SPB7</strain>
    </source>
</reference>
<sequence length="139" mass="15689">MKPAARRRARECAVQALYSWQLSQNDIADVEYQFLAEQDVKDVDVLYFRELLSGVATNSAYLDGLMKPYLSRLLEELGQVEKAVLRIALFELSKRSDVPYKVAINEAIELAKTFGAEDSHKFVNGVLDKAAPVIRPNKK</sequence>
<evidence type="ECO:0000255" key="1">
    <source>
        <dbReference type="HAMAP-Rule" id="MF_00073"/>
    </source>
</evidence>
<proteinExistence type="inferred from homology"/>
<organism>
    <name type="scientific">Salmonella paratyphi B (strain ATCC BAA-1250 / SPB7)</name>
    <dbReference type="NCBI Taxonomy" id="1016998"/>
    <lineage>
        <taxon>Bacteria</taxon>
        <taxon>Pseudomonadati</taxon>
        <taxon>Pseudomonadota</taxon>
        <taxon>Gammaproteobacteria</taxon>
        <taxon>Enterobacterales</taxon>
        <taxon>Enterobacteriaceae</taxon>
        <taxon>Salmonella</taxon>
    </lineage>
</organism>
<comment type="function">
    <text evidence="1">Involved in transcription antitermination. Required for transcription of ribosomal RNA (rRNA) genes. Binds specifically to the boxA antiterminator sequence of the ribosomal RNA (rrn) operons.</text>
</comment>
<comment type="similarity">
    <text evidence="1">Belongs to the NusB family.</text>
</comment>
<accession>A9MX13</accession>
<gene>
    <name evidence="1" type="primary">nusB</name>
    <name type="ordered locus">SPAB_03165</name>
</gene>
<dbReference type="EMBL" id="CP000886">
    <property type="protein sequence ID" value="ABX68526.1"/>
    <property type="molecule type" value="Genomic_DNA"/>
</dbReference>
<dbReference type="RefSeq" id="WP_000801129.1">
    <property type="nucleotide sequence ID" value="NC_010102.1"/>
</dbReference>
<dbReference type="BMRB" id="A9MX13"/>
<dbReference type="SMR" id="A9MX13"/>
<dbReference type="GeneID" id="89550189"/>
<dbReference type="KEGG" id="spq:SPAB_03165"/>
<dbReference type="PATRIC" id="fig|1016998.12.peg.2986"/>
<dbReference type="HOGENOM" id="CLU_087843_4_1_6"/>
<dbReference type="BioCyc" id="SENT1016998:SPAB_RS12930-MONOMER"/>
<dbReference type="Proteomes" id="UP000008556">
    <property type="component" value="Chromosome"/>
</dbReference>
<dbReference type="GO" id="GO:0005829">
    <property type="term" value="C:cytosol"/>
    <property type="evidence" value="ECO:0007669"/>
    <property type="project" value="TreeGrafter"/>
</dbReference>
<dbReference type="GO" id="GO:0003723">
    <property type="term" value="F:RNA binding"/>
    <property type="evidence" value="ECO:0007669"/>
    <property type="project" value="UniProtKB-UniRule"/>
</dbReference>
<dbReference type="GO" id="GO:0006353">
    <property type="term" value="P:DNA-templated transcription termination"/>
    <property type="evidence" value="ECO:0007669"/>
    <property type="project" value="UniProtKB-UniRule"/>
</dbReference>
<dbReference type="GO" id="GO:0031564">
    <property type="term" value="P:transcription antitermination"/>
    <property type="evidence" value="ECO:0007669"/>
    <property type="project" value="UniProtKB-KW"/>
</dbReference>
<dbReference type="CDD" id="cd00619">
    <property type="entry name" value="Terminator_NusB"/>
    <property type="match status" value="1"/>
</dbReference>
<dbReference type="FunFam" id="1.10.940.10:FF:000001">
    <property type="entry name" value="Transcription antitermination factor NusB"/>
    <property type="match status" value="1"/>
</dbReference>
<dbReference type="Gene3D" id="1.10.940.10">
    <property type="entry name" value="NusB-like"/>
    <property type="match status" value="1"/>
</dbReference>
<dbReference type="HAMAP" id="MF_00073">
    <property type="entry name" value="NusB"/>
    <property type="match status" value="1"/>
</dbReference>
<dbReference type="InterPro" id="IPR035926">
    <property type="entry name" value="NusB-like_sf"/>
</dbReference>
<dbReference type="InterPro" id="IPR011605">
    <property type="entry name" value="NusB_fam"/>
</dbReference>
<dbReference type="InterPro" id="IPR006027">
    <property type="entry name" value="NusB_RsmB_TIM44"/>
</dbReference>
<dbReference type="NCBIfam" id="TIGR01951">
    <property type="entry name" value="nusB"/>
    <property type="match status" value="1"/>
</dbReference>
<dbReference type="PANTHER" id="PTHR11078:SF3">
    <property type="entry name" value="ANTITERMINATION NUSB DOMAIN-CONTAINING PROTEIN"/>
    <property type="match status" value="1"/>
</dbReference>
<dbReference type="PANTHER" id="PTHR11078">
    <property type="entry name" value="N UTILIZATION SUBSTANCE PROTEIN B-RELATED"/>
    <property type="match status" value="1"/>
</dbReference>
<dbReference type="Pfam" id="PF01029">
    <property type="entry name" value="NusB"/>
    <property type="match status" value="1"/>
</dbReference>
<dbReference type="SUPFAM" id="SSF48013">
    <property type="entry name" value="NusB-like"/>
    <property type="match status" value="1"/>
</dbReference>
<keyword id="KW-0694">RNA-binding</keyword>
<keyword id="KW-0804">Transcription</keyword>
<keyword id="KW-0889">Transcription antitermination</keyword>
<keyword id="KW-0805">Transcription regulation</keyword>
<protein>
    <recommendedName>
        <fullName evidence="1">Transcription antitermination protein NusB</fullName>
    </recommendedName>
    <alternativeName>
        <fullName evidence="1">Antitermination factor NusB</fullName>
    </alternativeName>
</protein>
<feature type="chain" id="PRO_1000075201" description="Transcription antitermination protein NusB">
    <location>
        <begin position="1"/>
        <end position="139"/>
    </location>
</feature>
<name>NUSB_SALPB</name>